<dbReference type="EC" id="4.2.3.5" evidence="1"/>
<dbReference type="EMBL" id="CP000127">
    <property type="protein sequence ID" value="ABA59383.1"/>
    <property type="molecule type" value="Genomic_DNA"/>
</dbReference>
<dbReference type="RefSeq" id="WP_002812292.1">
    <property type="nucleotide sequence ID" value="NC_007484.1"/>
</dbReference>
<dbReference type="SMR" id="Q3J713"/>
<dbReference type="FunCoup" id="Q3J713">
    <property type="interactions" value="494"/>
</dbReference>
<dbReference type="STRING" id="323261.Noc_2938"/>
<dbReference type="KEGG" id="noc:Noc_2938"/>
<dbReference type="eggNOG" id="COG0082">
    <property type="taxonomic scope" value="Bacteria"/>
</dbReference>
<dbReference type="HOGENOM" id="CLU_034547_0_2_6"/>
<dbReference type="InParanoid" id="Q3J713"/>
<dbReference type="UniPathway" id="UPA00053">
    <property type="reaction ID" value="UER00090"/>
</dbReference>
<dbReference type="Proteomes" id="UP000006838">
    <property type="component" value="Chromosome"/>
</dbReference>
<dbReference type="GO" id="GO:0005829">
    <property type="term" value="C:cytosol"/>
    <property type="evidence" value="ECO:0007669"/>
    <property type="project" value="TreeGrafter"/>
</dbReference>
<dbReference type="GO" id="GO:0004107">
    <property type="term" value="F:chorismate synthase activity"/>
    <property type="evidence" value="ECO:0007669"/>
    <property type="project" value="UniProtKB-UniRule"/>
</dbReference>
<dbReference type="GO" id="GO:0010181">
    <property type="term" value="F:FMN binding"/>
    <property type="evidence" value="ECO:0007669"/>
    <property type="project" value="TreeGrafter"/>
</dbReference>
<dbReference type="GO" id="GO:0008652">
    <property type="term" value="P:amino acid biosynthetic process"/>
    <property type="evidence" value="ECO:0007669"/>
    <property type="project" value="UniProtKB-KW"/>
</dbReference>
<dbReference type="GO" id="GO:0009073">
    <property type="term" value="P:aromatic amino acid family biosynthetic process"/>
    <property type="evidence" value="ECO:0007669"/>
    <property type="project" value="UniProtKB-KW"/>
</dbReference>
<dbReference type="GO" id="GO:0009423">
    <property type="term" value="P:chorismate biosynthetic process"/>
    <property type="evidence" value="ECO:0007669"/>
    <property type="project" value="UniProtKB-UniRule"/>
</dbReference>
<dbReference type="CDD" id="cd07304">
    <property type="entry name" value="Chorismate_synthase"/>
    <property type="match status" value="1"/>
</dbReference>
<dbReference type="FunFam" id="3.60.150.10:FF:000001">
    <property type="entry name" value="Chorismate synthase"/>
    <property type="match status" value="1"/>
</dbReference>
<dbReference type="Gene3D" id="3.60.150.10">
    <property type="entry name" value="Chorismate synthase AroC"/>
    <property type="match status" value="1"/>
</dbReference>
<dbReference type="HAMAP" id="MF_00300">
    <property type="entry name" value="Chorismate_synth"/>
    <property type="match status" value="1"/>
</dbReference>
<dbReference type="InterPro" id="IPR000453">
    <property type="entry name" value="Chorismate_synth"/>
</dbReference>
<dbReference type="InterPro" id="IPR035904">
    <property type="entry name" value="Chorismate_synth_AroC_sf"/>
</dbReference>
<dbReference type="InterPro" id="IPR020541">
    <property type="entry name" value="Chorismate_synthase_CS"/>
</dbReference>
<dbReference type="NCBIfam" id="TIGR00033">
    <property type="entry name" value="aroC"/>
    <property type="match status" value="1"/>
</dbReference>
<dbReference type="NCBIfam" id="NF003793">
    <property type="entry name" value="PRK05382.1"/>
    <property type="match status" value="1"/>
</dbReference>
<dbReference type="PANTHER" id="PTHR21085">
    <property type="entry name" value="CHORISMATE SYNTHASE"/>
    <property type="match status" value="1"/>
</dbReference>
<dbReference type="PANTHER" id="PTHR21085:SF0">
    <property type="entry name" value="CHORISMATE SYNTHASE"/>
    <property type="match status" value="1"/>
</dbReference>
<dbReference type="Pfam" id="PF01264">
    <property type="entry name" value="Chorismate_synt"/>
    <property type="match status" value="1"/>
</dbReference>
<dbReference type="PIRSF" id="PIRSF001456">
    <property type="entry name" value="Chorismate_synth"/>
    <property type="match status" value="1"/>
</dbReference>
<dbReference type="SUPFAM" id="SSF103263">
    <property type="entry name" value="Chorismate synthase, AroC"/>
    <property type="match status" value="1"/>
</dbReference>
<dbReference type="PROSITE" id="PS00787">
    <property type="entry name" value="CHORISMATE_SYNTHASE_1"/>
    <property type="match status" value="1"/>
</dbReference>
<dbReference type="PROSITE" id="PS00788">
    <property type="entry name" value="CHORISMATE_SYNTHASE_2"/>
    <property type="match status" value="1"/>
</dbReference>
<dbReference type="PROSITE" id="PS00789">
    <property type="entry name" value="CHORISMATE_SYNTHASE_3"/>
    <property type="match status" value="1"/>
</dbReference>
<comment type="function">
    <text evidence="1">Catalyzes the anti-1,4-elimination of the C-3 phosphate and the C-6 proR hydrogen from 5-enolpyruvylshikimate-3-phosphate (EPSP) to yield chorismate, which is the branch point compound that serves as the starting substrate for the three terminal pathways of aromatic amino acid biosynthesis. This reaction introduces a second double bond into the aromatic ring system.</text>
</comment>
<comment type="catalytic activity">
    <reaction evidence="1">
        <text>5-O-(1-carboxyvinyl)-3-phosphoshikimate = chorismate + phosphate</text>
        <dbReference type="Rhea" id="RHEA:21020"/>
        <dbReference type="ChEBI" id="CHEBI:29748"/>
        <dbReference type="ChEBI" id="CHEBI:43474"/>
        <dbReference type="ChEBI" id="CHEBI:57701"/>
        <dbReference type="EC" id="4.2.3.5"/>
    </reaction>
</comment>
<comment type="cofactor">
    <cofactor evidence="1">
        <name>FMNH2</name>
        <dbReference type="ChEBI" id="CHEBI:57618"/>
    </cofactor>
    <text evidence="1">Reduced FMN (FMNH(2)).</text>
</comment>
<comment type="pathway">
    <text evidence="1">Metabolic intermediate biosynthesis; chorismate biosynthesis; chorismate from D-erythrose 4-phosphate and phosphoenolpyruvate: step 7/7.</text>
</comment>
<comment type="subunit">
    <text evidence="1">Homotetramer.</text>
</comment>
<comment type="similarity">
    <text evidence="1">Belongs to the chorismate synthase family.</text>
</comment>
<organism>
    <name type="scientific">Nitrosococcus oceani (strain ATCC 19707 / BCRC 17464 / JCM 30415 / NCIMB 11848 / C-107)</name>
    <dbReference type="NCBI Taxonomy" id="323261"/>
    <lineage>
        <taxon>Bacteria</taxon>
        <taxon>Pseudomonadati</taxon>
        <taxon>Pseudomonadota</taxon>
        <taxon>Gammaproteobacteria</taxon>
        <taxon>Chromatiales</taxon>
        <taxon>Chromatiaceae</taxon>
        <taxon>Nitrosococcus</taxon>
    </lineage>
</organism>
<sequence>MSGNTLGKLFTVTTFGESHGPALGCIVDGCPPGLALCETDIQIDLDRRRPGKSRHTTQRREPDQVQILSGVFEGKTTGTPIGLLIENVDQRSRDYDKIKEQIRPGHADYTYLQKYGLRDYRGGGRSSARETAMRVAAGAIAKKYLAERHGVKIRGYLAQLGPIRAERFDWEIVEKNPFFCPDPDKISELEAYMDALRKEGDSIGARINVVATGVPPGLGEPVFDRLDADLAHALMSINAVKGVEIGVGFAAVTQKGTDHRDPLTPEGFLSNHAGGVLGGISTGQDILASIALKPTSSLRLPERTINCRGESAEVVTTGRHDPCVGIRATPIAEAMAALVLMDHLLRHRAQNMDVQPSLPSIPAYPGGGG</sequence>
<reference key="1">
    <citation type="journal article" date="2006" name="Appl. Environ. Microbiol.">
        <title>Complete genome sequence of the marine, chemolithoautotrophic, ammonia-oxidizing bacterium Nitrosococcus oceani ATCC 19707.</title>
        <authorList>
            <person name="Klotz M.G."/>
            <person name="Arp D.J."/>
            <person name="Chain P.S.G."/>
            <person name="El-Sheikh A.F."/>
            <person name="Hauser L.J."/>
            <person name="Hommes N.G."/>
            <person name="Larimer F.W."/>
            <person name="Malfatti S.A."/>
            <person name="Norton J.M."/>
            <person name="Poret-Peterson A.T."/>
            <person name="Vergez L.M."/>
            <person name="Ward B.B."/>
        </authorList>
    </citation>
    <scope>NUCLEOTIDE SEQUENCE [LARGE SCALE GENOMIC DNA]</scope>
    <source>
        <strain>ATCC 19707 / BCRC 17464 / JCM 30415 / NCIMB 11848 / C-107</strain>
    </source>
</reference>
<evidence type="ECO:0000255" key="1">
    <source>
        <dbReference type="HAMAP-Rule" id="MF_00300"/>
    </source>
</evidence>
<accession>Q3J713</accession>
<proteinExistence type="inferred from homology"/>
<name>AROC_NITOC</name>
<protein>
    <recommendedName>
        <fullName evidence="1">Chorismate synthase</fullName>
        <shortName evidence="1">CS</shortName>
        <ecNumber evidence="1">4.2.3.5</ecNumber>
    </recommendedName>
    <alternativeName>
        <fullName evidence="1">5-enolpyruvylshikimate-3-phosphate phospholyase</fullName>
    </alternativeName>
</protein>
<gene>
    <name evidence="1" type="primary">aroC</name>
    <name type="ordered locus">Noc_2938</name>
</gene>
<feature type="chain" id="PRO_0000256306" description="Chorismate synthase">
    <location>
        <begin position="1"/>
        <end position="369"/>
    </location>
</feature>
<feature type="binding site" evidence="1">
    <location>
        <position position="48"/>
    </location>
    <ligand>
        <name>NADP(+)</name>
        <dbReference type="ChEBI" id="CHEBI:58349"/>
    </ligand>
</feature>
<feature type="binding site" evidence="1">
    <location>
        <position position="54"/>
    </location>
    <ligand>
        <name>NADP(+)</name>
        <dbReference type="ChEBI" id="CHEBI:58349"/>
    </ligand>
</feature>
<feature type="binding site" evidence="1">
    <location>
        <begin position="125"/>
        <end position="127"/>
    </location>
    <ligand>
        <name>FMN</name>
        <dbReference type="ChEBI" id="CHEBI:58210"/>
    </ligand>
</feature>
<feature type="binding site" evidence="1">
    <location>
        <begin position="238"/>
        <end position="239"/>
    </location>
    <ligand>
        <name>FMN</name>
        <dbReference type="ChEBI" id="CHEBI:58210"/>
    </ligand>
</feature>
<feature type="binding site" evidence="1">
    <location>
        <position position="278"/>
    </location>
    <ligand>
        <name>FMN</name>
        <dbReference type="ChEBI" id="CHEBI:58210"/>
    </ligand>
</feature>
<feature type="binding site" evidence="1">
    <location>
        <begin position="293"/>
        <end position="297"/>
    </location>
    <ligand>
        <name>FMN</name>
        <dbReference type="ChEBI" id="CHEBI:58210"/>
    </ligand>
</feature>
<feature type="binding site" evidence="1">
    <location>
        <position position="319"/>
    </location>
    <ligand>
        <name>FMN</name>
        <dbReference type="ChEBI" id="CHEBI:58210"/>
    </ligand>
</feature>
<keyword id="KW-0028">Amino-acid biosynthesis</keyword>
<keyword id="KW-0057">Aromatic amino acid biosynthesis</keyword>
<keyword id="KW-0274">FAD</keyword>
<keyword id="KW-0285">Flavoprotein</keyword>
<keyword id="KW-0288">FMN</keyword>
<keyword id="KW-0456">Lyase</keyword>
<keyword id="KW-0521">NADP</keyword>
<keyword id="KW-1185">Reference proteome</keyword>